<organism>
    <name type="scientific">Homo sapiens</name>
    <name type="common">Human</name>
    <dbReference type="NCBI Taxonomy" id="9606"/>
    <lineage>
        <taxon>Eukaryota</taxon>
        <taxon>Metazoa</taxon>
        <taxon>Chordata</taxon>
        <taxon>Craniata</taxon>
        <taxon>Vertebrata</taxon>
        <taxon>Euteleostomi</taxon>
        <taxon>Mammalia</taxon>
        <taxon>Eutheria</taxon>
        <taxon>Euarchontoglires</taxon>
        <taxon>Primates</taxon>
        <taxon>Haplorrhini</taxon>
        <taxon>Catarrhini</taxon>
        <taxon>Hominidae</taxon>
        <taxon>Homo</taxon>
    </lineage>
</organism>
<evidence type="ECO:0000250" key="1">
    <source>
        <dbReference type="UniProtKB" id="A2ALV5"/>
    </source>
</evidence>
<evidence type="ECO:0000256" key="2">
    <source>
        <dbReference type="SAM" id="MobiDB-lite"/>
    </source>
</evidence>
<evidence type="ECO:0000269" key="3">
    <source>
    </source>
</evidence>
<evidence type="ECO:0000269" key="4">
    <source>
    </source>
</evidence>
<evidence type="ECO:0000269" key="5">
    <source>
    </source>
</evidence>
<evidence type="ECO:0000269" key="6">
    <source>
    </source>
</evidence>
<evidence type="ECO:0000303" key="7">
    <source>
    </source>
</evidence>
<evidence type="ECO:0000303" key="8">
    <source>
    </source>
</evidence>
<evidence type="ECO:0000303" key="9">
    <source>
    </source>
</evidence>
<evidence type="ECO:0000305" key="10"/>
<evidence type="ECO:0000305" key="11">
    <source>
    </source>
</evidence>
<evidence type="ECO:0000312" key="12">
    <source>
        <dbReference type="HGNC" id="HGNC:26535"/>
    </source>
</evidence>
<dbReference type="EC" id="3.6.-.-" evidence="3"/>
<dbReference type="EMBL" id="AK057341">
    <property type="protein sequence ID" value="BAB71436.1"/>
    <property type="molecule type" value="mRNA"/>
</dbReference>
<dbReference type="EMBL" id="AL135787">
    <property type="status" value="NOT_ANNOTATED_CDS"/>
    <property type="molecule type" value="Genomic_DNA"/>
</dbReference>
<dbReference type="EMBL" id="AL356491">
    <property type="status" value="NOT_ANNOTATED_CDS"/>
    <property type="molecule type" value="Genomic_DNA"/>
</dbReference>
<dbReference type="EMBL" id="AL354877">
    <property type="status" value="NOT_ANNOTATED_CDS"/>
    <property type="molecule type" value="Genomic_DNA"/>
</dbReference>
<dbReference type="EMBL" id="BC112357">
    <property type="protein sequence ID" value="AAI12358.1"/>
    <property type="molecule type" value="mRNA"/>
</dbReference>
<dbReference type="CCDS" id="CCDS43863.1">
    <molecule id="Q5VXU9-3"/>
</dbReference>
<dbReference type="CCDS" id="CCDS6781.3">
    <molecule id="Q5VXU9-1"/>
</dbReference>
<dbReference type="RefSeq" id="NP_001074020.3">
    <molecule id="Q5VXU9-3"/>
    <property type="nucleotide sequence ID" value="NM_001080551.3"/>
</dbReference>
<dbReference type="RefSeq" id="NP_775792.5">
    <molecule id="Q5VXU9-1"/>
    <property type="nucleotide sequence ID" value="NM_173521.5"/>
</dbReference>
<dbReference type="RefSeq" id="XP_011516604.1">
    <molecule id="Q5VXU9-1"/>
    <property type="nucleotide sequence ID" value="XM_011518302.3"/>
</dbReference>
<dbReference type="RefSeq" id="XP_011516605.1">
    <molecule id="Q5VXU9-1"/>
    <property type="nucleotide sequence ID" value="XM_011518303.2"/>
</dbReference>
<dbReference type="FunCoup" id="Q5VXU9">
    <property type="interactions" value="94"/>
</dbReference>
<dbReference type="IntAct" id="Q5VXU9">
    <property type="interactions" value="1"/>
</dbReference>
<dbReference type="STRING" id="9606.ENSP00000363405"/>
<dbReference type="iPTMnet" id="Q5VXU9"/>
<dbReference type="PhosphoSitePlus" id="Q5VXU9"/>
<dbReference type="BioMuta" id="C9orf84"/>
<dbReference type="DMDM" id="71152416"/>
<dbReference type="MassIVE" id="Q5VXU9"/>
<dbReference type="PaxDb" id="9606-ENSP00000363405"/>
<dbReference type="PeptideAtlas" id="Q5VXU9"/>
<dbReference type="ProteomicsDB" id="231"/>
<dbReference type="ProteomicsDB" id="65615">
    <molecule id="Q5VXU9-1"/>
</dbReference>
<dbReference type="Antibodypedia" id="49256">
    <property type="antibodies" value="34 antibodies from 5 providers"/>
</dbReference>
<dbReference type="DNASU" id="158401"/>
<dbReference type="Ensembl" id="ENST00000318737.8">
    <molecule id="Q5VXU9-1"/>
    <property type="protein sequence ID" value="ENSP00000322108.4"/>
    <property type="gene ID" value="ENSG00000165181.17"/>
</dbReference>
<dbReference type="Ensembl" id="ENST00000374283.5">
    <molecule id="Q5VXU9-2"/>
    <property type="protein sequence ID" value="ENSP00000363401.5"/>
    <property type="gene ID" value="ENSG00000165181.17"/>
</dbReference>
<dbReference type="Ensembl" id="ENST00000374287.7">
    <molecule id="Q5VXU9-1"/>
    <property type="protein sequence ID" value="ENSP00000363405.3"/>
    <property type="gene ID" value="ENSG00000165181.17"/>
</dbReference>
<dbReference type="Ensembl" id="ENST00000394779.7">
    <molecule id="Q5VXU9-3"/>
    <property type="protein sequence ID" value="ENSP00000378259.3"/>
    <property type="gene ID" value="ENSG00000165181.17"/>
</dbReference>
<dbReference type="GeneID" id="158401"/>
<dbReference type="UCSC" id="uc004bfq.5">
    <molecule id="Q5VXU9-1"/>
    <property type="organism name" value="human"/>
</dbReference>
<dbReference type="AGR" id="HGNC:26535"/>
<dbReference type="CTD" id="158401"/>
<dbReference type="DisGeNET" id="158401"/>
<dbReference type="GeneCards" id="SHOC1"/>
<dbReference type="HGNC" id="HGNC:26535">
    <property type="gene designation" value="SHOC1"/>
</dbReference>
<dbReference type="HPA" id="ENSG00000165181">
    <property type="expression patterns" value="Tissue enriched (testis)"/>
</dbReference>
<dbReference type="MalaCards" id="SHOC1"/>
<dbReference type="MIM" id="618038">
    <property type="type" value="gene"/>
</dbReference>
<dbReference type="MIM" id="619949">
    <property type="type" value="phenotype"/>
</dbReference>
<dbReference type="neXtProt" id="NX_Q5VXU9"/>
<dbReference type="OpenTargets" id="ENSG00000165181"/>
<dbReference type="Orphanet" id="399805">
    <property type="disease" value="Male infertility with azoospermia or oligozoospermia due to single gene mutation"/>
</dbReference>
<dbReference type="PharmGKB" id="PA134876692"/>
<dbReference type="VEuPathDB" id="HostDB:ENSG00000165181"/>
<dbReference type="eggNOG" id="ENOG502QVCW">
    <property type="taxonomic scope" value="Eukaryota"/>
</dbReference>
<dbReference type="GeneTree" id="ENSGT00390000013037"/>
<dbReference type="HOGENOM" id="CLU_004755_1_0_1"/>
<dbReference type="InParanoid" id="Q5VXU9"/>
<dbReference type="OMA" id="WIILYSK"/>
<dbReference type="OrthoDB" id="9909657at2759"/>
<dbReference type="PAN-GO" id="Q5VXU9">
    <property type="GO annotations" value="3 GO annotations based on evolutionary models"/>
</dbReference>
<dbReference type="PhylomeDB" id="Q5VXU9"/>
<dbReference type="TreeFam" id="TF338326"/>
<dbReference type="PathwayCommons" id="Q5VXU9"/>
<dbReference type="SignaLink" id="Q5VXU9"/>
<dbReference type="BioGRID-ORCS" id="158401">
    <property type="hits" value="8 hits in 1131 CRISPR screens"/>
</dbReference>
<dbReference type="ChiTaRS" id="C9orf84">
    <property type="organism name" value="human"/>
</dbReference>
<dbReference type="GenomeRNAi" id="158401"/>
<dbReference type="Pharos" id="Q5VXU9">
    <property type="development level" value="Tdark"/>
</dbReference>
<dbReference type="PRO" id="PR:Q5VXU9"/>
<dbReference type="Proteomes" id="UP000005640">
    <property type="component" value="Chromosome 9"/>
</dbReference>
<dbReference type="RNAct" id="Q5VXU9">
    <property type="molecule type" value="protein"/>
</dbReference>
<dbReference type="Bgee" id="ENSG00000165181">
    <property type="expression patterns" value="Expressed in pancreatic ductal cell and 78 other cell types or tissues"/>
</dbReference>
<dbReference type="ExpressionAtlas" id="Q5VXU9">
    <property type="expression patterns" value="baseline and differential"/>
</dbReference>
<dbReference type="GO" id="GO:0005694">
    <property type="term" value="C:chromosome"/>
    <property type="evidence" value="ECO:0000250"/>
    <property type="project" value="UniProtKB"/>
</dbReference>
<dbReference type="GO" id="GO:0000794">
    <property type="term" value="C:condensed nuclear chromosome"/>
    <property type="evidence" value="ECO:0000250"/>
    <property type="project" value="UniProtKB"/>
</dbReference>
<dbReference type="GO" id="GO:0016887">
    <property type="term" value="F:ATP hydrolysis activity"/>
    <property type="evidence" value="ECO:0000314"/>
    <property type="project" value="UniProtKB"/>
</dbReference>
<dbReference type="GO" id="GO:0003697">
    <property type="term" value="F:single-stranded DNA binding"/>
    <property type="evidence" value="ECO:0000314"/>
    <property type="project" value="UniProtKB"/>
</dbReference>
<dbReference type="GO" id="GO:0007131">
    <property type="term" value="P:reciprocal meiotic recombination"/>
    <property type="evidence" value="ECO:0000250"/>
    <property type="project" value="UniProtKB"/>
</dbReference>
<dbReference type="GO" id="GO:0000712">
    <property type="term" value="P:resolution of meiotic recombination intermediates"/>
    <property type="evidence" value="ECO:0000250"/>
    <property type="project" value="UniProtKB"/>
</dbReference>
<dbReference type="GO" id="GO:0007130">
    <property type="term" value="P:synaptonemal complex assembly"/>
    <property type="evidence" value="ECO:0000250"/>
    <property type="project" value="UniProtKB"/>
</dbReference>
<dbReference type="InterPro" id="IPR039991">
    <property type="entry name" value="SHOC1"/>
</dbReference>
<dbReference type="PANTHER" id="PTHR35668">
    <property type="entry name" value="PROTEIN SHORTAGE IN CHIASMATA 1 ORTHOLOG"/>
    <property type="match status" value="1"/>
</dbReference>
<dbReference type="PANTHER" id="PTHR35668:SF1">
    <property type="entry name" value="PROTEIN SHORTAGE IN CHIASMATA 1 ORTHOLOG"/>
    <property type="match status" value="1"/>
</dbReference>
<dbReference type="Pfam" id="PF17825">
    <property type="entry name" value="DUF5587"/>
    <property type="match status" value="1"/>
</dbReference>
<proteinExistence type="evidence at protein level"/>
<gene>
    <name evidence="9 12" type="primary">SHOC1</name>
    <name evidence="12" type="synonym">C9orf84</name>
    <name evidence="1" type="synonym">ZIP2</name>
</gene>
<protein>
    <recommendedName>
        <fullName evidence="10">Protein shortage in chiasmata 1 ortholog</fullName>
        <ecNumber evidence="3">3.6.-.-</ecNumber>
    </recommendedName>
    <alternativeName>
        <fullName evidence="1">Protein ZIP2 homolog</fullName>
        <shortName evidence="1">MZIP2</shortName>
    </alternativeName>
</protein>
<accession>Q5VXU9</accession>
<accession>A2A2V3</accession>
<accession>Q2M1H8</accession>
<accession>Q96M73</accession>
<keyword id="KW-0025">Alternative splicing</keyword>
<keyword id="KW-0158">Chromosome</keyword>
<keyword id="KW-0225">Disease variant</keyword>
<keyword id="KW-0238">DNA-binding</keyword>
<keyword id="KW-0378">Hydrolase</keyword>
<keyword id="KW-0469">Meiosis</keyword>
<keyword id="KW-1267">Proteomics identification</keyword>
<keyword id="KW-1185">Reference proteome</keyword>
<sequence>MTDTSVLDQWKASFFVEDFLEKKTITRMVTQINCEFEEVVPSSNPDSQIEVEEVSLYTHMDYNEVFTPVSCLEKCSALQNQNQDLFIDDKGILFVSSRKHLPTLPTLLSRLKLFLVKDPLLDFKGQIFTEANFSRECFSLQETLEAFVKEDFCMDKVNFCQEKLEDTICLNEPSSFLIEYEFLIPPSLKPEIDIPSLSELKELLNPVPEIINYVDEKEKLFERDLTNKHGIEDIGDIKFSSTEILTIQSQSEPEECSKPGELEMPLTPLFLTCQHSSVNSLRTELQTFPLSPVCKINLLTAEESANEYYMMWQLERCRSPLNPFLLTVPRIQEPHSQYSVTDLKKIFSVKEESLVINLEKAEWWKQAGLNLKMMETLEHLNTYLCHDNLSSNDTKIEIFLPTKVLQLESCLEHKSHSSPIALIDEKSTNAHLSLPQKSPSLAKEVPDLCFSDDYFSDKGAAKEEKPKNDQEPVNRIIQKKENNDHFELDCTGPSIKSPSSSIIKKASFEHGKKQENDLDLLSDFIMLRNKYKTCTSKTEVTNSDEKHDKEACSLTLQEESPIVHINKTLEEINQERGTDSVIEIQASDSQCQAFCLLEAAASPILKNLVSLCTLPTANWKFATVIFDQTRFLLKEQEKVVSDAVRQGTIDEREMTFKHAALLHLLVTIRDVLLTCSLDTALGYLSKAKDIYNSILGPYLGDIWRQLEIVQFIRGKKPETNYKIQELQCQILSWMQSQQQIKVLIIIRMDSDGEKHFLIKILNKIEGLTLTVLHSNERKDFLESEGVLRGTSSCVVVHNQYIGADFPWSNFSFVVEYNYVEDSCWTKHCKELNIPYMAFKVILPDTVLERSTLLDRFGGFLLEIQIPYVFFASEGLLNTPDILQLLESNYNISLVERGCSESLKLFGSSECYVVVTIDEHTAIILQDLEELNYEKASDNIIMRLMALSLQYRYCWIILYTKETLNSEYLLTEKTLHHLALIYAALVSFGLNSEELDVKLIIAPGVEATALIIRQIADHSLMTSKRDPHEWLDKSWLKVSPSEEEMYLLDFPCINPLVAQLMLNKGPSLHWILLATLCQLQELLPEVPEKVLKHFCSITSLFKIGSSSITKSPQISSPQENRNQISTLSSQSSASDLDSVIQEHNEYYQYLGLGETVQEDKTTILNDNSSIMELKEISSFLPPVTSYNQTSYWKDSSCKSNIGQNTPFLINIESRRPAYNSFLNHSDSESDVFSLGLTQMNCETIKSPTDTQKRVSVVPRFINSQKRRTHEAKGFINKDVSDPIFSLEGTQSPLHWNFKKNIWEQENHPFNLQYGAQQTACNKLYSQKGNLFTDQQKCLSDESEGLTCESSKDETFWRELPSVPSLDLFRASDSNANQKEFNSLYFYQRAGKSLGQKRHHESSFNSGDKESLTGFMCSQLPQFKKRRLAYEKVPGRVDGQTRLRFF</sequence>
<feature type="chain" id="PRO_0000089719" description="Protein shortage in chiasmata 1 ortholog">
    <location>
        <begin position="1"/>
        <end position="1444"/>
    </location>
</feature>
<feature type="region of interest" description="Disordered" evidence="2">
    <location>
        <begin position="1106"/>
        <end position="1129"/>
    </location>
</feature>
<feature type="compositionally biased region" description="Low complexity" evidence="2">
    <location>
        <begin position="1106"/>
        <end position="1117"/>
    </location>
</feature>
<feature type="splice variant" id="VSP_046641" description="In isoform 3." evidence="10">
    <original>MTDTSVLDQWKASFFVEDFLEKKTITRMVTQINCEFEEVVPSSNPDSQIEVEEVSLYTHMDYNEVFTPVSCLEKCSALQNQNQD</original>
    <variation>MSETLGDELEILRGKMMQRRPRSAEVKYFYFFKILLRLRLAILKY</variation>
    <location>
        <begin position="1"/>
        <end position="84"/>
    </location>
</feature>
<feature type="splice variant" id="VSP_014747" description="In isoform 2." evidence="7 8">
    <original>M</original>
    <variation>MFSALKYHAIDYLYENVVRKKFYRDALLLRIPSCLYQDESYHVAVTDNKFRRPWTRVSAVSVPGM</variation>
    <location>
        <position position="1"/>
    </location>
</feature>
<feature type="splice variant" id="VSP_014748" description="In isoform 2." evidence="7 8">
    <original>SCLEHKSHSSPIALID</original>
    <variation>CKYITVNISYVNIFRM</variation>
    <location>
        <begin position="409"/>
        <end position="424"/>
    </location>
</feature>
<feature type="splice variant" id="VSP_014749" description="In isoform 2." evidence="7 8">
    <location>
        <begin position="425"/>
        <end position="1444"/>
    </location>
</feature>
<feature type="sequence variant" id="VAR_050829" description="In dbSNP:rs10981047.">
    <original>T</original>
    <variation>S</variation>
    <location>
        <position position="226"/>
    </location>
</feature>
<feature type="sequence variant" id="VAR_050830" description="In dbSNP:rs7470491.">
    <original>H</original>
    <variation>R</variation>
    <location>
        <position position="416"/>
    </location>
</feature>
<feature type="sequence variant" id="VAR_087416" description="In SPGF75." evidence="4">
    <location>
        <begin position="449"/>
        <end position="1444"/>
    </location>
</feature>
<feature type="sequence variant" id="VAR_087417" description="In SPGF75." evidence="5">
    <location>
        <begin position="528"/>
        <end position="1444"/>
    </location>
</feature>
<feature type="sequence variant" id="VAR_050831" description="In dbSNP:rs1322257.">
    <original>I</original>
    <variation>T</variation>
    <location>
        <position position="649"/>
    </location>
</feature>
<feature type="sequence variant" id="VAR_087418" description="In SPGF75; uncertain significance." evidence="6">
    <original>A</original>
    <variation>T</variation>
    <location>
        <position position="660"/>
    </location>
</feature>
<feature type="sequence variant" id="VAR_050832" description="In dbSNP:rs11791445.">
    <original>M</original>
    <variation>L</variation>
    <location>
        <position position="734"/>
    </location>
</feature>
<feature type="sequence variant" id="VAR_050833" description="In dbSNP:rs7868266.">
    <original>R</original>
    <variation>K</variation>
    <location>
        <position position="788"/>
    </location>
</feature>
<feature type="sequence variant" id="VAR_050834" description="In dbSNP:rs7036568.">
    <original>N</original>
    <variation>K</variation>
    <location>
        <position position="809"/>
    </location>
</feature>
<feature type="sequence variant" id="VAR_050835" description="In dbSNP:rs1407390.">
    <original>Y</original>
    <variation>C</variation>
    <location>
        <position position="932"/>
    </location>
</feature>
<feature type="sequence variant" id="VAR_050836" description="In dbSNP:rs6477845.">
    <original>L</original>
    <variation>P</variation>
    <location>
        <position position="968"/>
    </location>
</feature>
<feature type="sequence variant" id="VAR_050837" description="In dbSNP:rs1475110.">
    <original>I</original>
    <variation>T</variation>
    <location>
        <position position="1162"/>
    </location>
</feature>
<feature type="sequence variant" id="VAR_050838" description="In dbSNP:rs7869279.">
    <original>E</original>
    <variation>G</variation>
    <location>
        <position position="1174"/>
    </location>
</feature>
<feature type="sequence variant" id="VAR_050839" description="In dbSNP:rs1322254.">
    <original>N</original>
    <variation>K</variation>
    <location>
        <position position="1380"/>
    </location>
</feature>
<feature type="sequence variant" id="VAR_050840" description="In dbSNP:rs10981009.">
    <original>R</original>
    <variation>C</variation>
    <location>
        <position position="1425"/>
    </location>
</feature>
<feature type="sequence variant" id="VAR_087419" description="In SPGF75; uncertain significance." evidence="6">
    <original>R</original>
    <variation>H</variation>
    <location>
        <position position="1425"/>
    </location>
</feature>
<reference key="1">
    <citation type="journal article" date="2004" name="Nat. Genet.">
        <title>Complete sequencing and characterization of 21,243 full-length human cDNAs.</title>
        <authorList>
            <person name="Ota T."/>
            <person name="Suzuki Y."/>
            <person name="Nishikawa T."/>
            <person name="Otsuki T."/>
            <person name="Sugiyama T."/>
            <person name="Irie R."/>
            <person name="Wakamatsu A."/>
            <person name="Hayashi K."/>
            <person name="Sato H."/>
            <person name="Nagai K."/>
            <person name="Kimura K."/>
            <person name="Makita H."/>
            <person name="Sekine M."/>
            <person name="Obayashi M."/>
            <person name="Nishi T."/>
            <person name="Shibahara T."/>
            <person name="Tanaka T."/>
            <person name="Ishii S."/>
            <person name="Yamamoto J."/>
            <person name="Saito K."/>
            <person name="Kawai Y."/>
            <person name="Isono Y."/>
            <person name="Nakamura Y."/>
            <person name="Nagahari K."/>
            <person name="Murakami K."/>
            <person name="Yasuda T."/>
            <person name="Iwayanagi T."/>
            <person name="Wagatsuma M."/>
            <person name="Shiratori A."/>
            <person name="Sudo H."/>
            <person name="Hosoiri T."/>
            <person name="Kaku Y."/>
            <person name="Kodaira H."/>
            <person name="Kondo H."/>
            <person name="Sugawara M."/>
            <person name="Takahashi M."/>
            <person name="Kanda K."/>
            <person name="Yokoi T."/>
            <person name="Furuya T."/>
            <person name="Kikkawa E."/>
            <person name="Omura Y."/>
            <person name="Abe K."/>
            <person name="Kamihara K."/>
            <person name="Katsuta N."/>
            <person name="Sato K."/>
            <person name="Tanikawa M."/>
            <person name="Yamazaki M."/>
            <person name="Ninomiya K."/>
            <person name="Ishibashi T."/>
            <person name="Yamashita H."/>
            <person name="Murakawa K."/>
            <person name="Fujimori K."/>
            <person name="Tanai H."/>
            <person name="Kimata M."/>
            <person name="Watanabe M."/>
            <person name="Hiraoka S."/>
            <person name="Chiba Y."/>
            <person name="Ishida S."/>
            <person name="Ono Y."/>
            <person name="Takiguchi S."/>
            <person name="Watanabe S."/>
            <person name="Yosida M."/>
            <person name="Hotuta T."/>
            <person name="Kusano J."/>
            <person name="Kanehori K."/>
            <person name="Takahashi-Fujii A."/>
            <person name="Hara H."/>
            <person name="Tanase T.-O."/>
            <person name="Nomura Y."/>
            <person name="Togiya S."/>
            <person name="Komai F."/>
            <person name="Hara R."/>
            <person name="Takeuchi K."/>
            <person name="Arita M."/>
            <person name="Imose N."/>
            <person name="Musashino K."/>
            <person name="Yuuki H."/>
            <person name="Oshima A."/>
            <person name="Sasaki N."/>
            <person name="Aotsuka S."/>
            <person name="Yoshikawa Y."/>
            <person name="Matsunawa H."/>
            <person name="Ichihara T."/>
            <person name="Shiohata N."/>
            <person name="Sano S."/>
            <person name="Moriya S."/>
            <person name="Momiyama H."/>
            <person name="Satoh N."/>
            <person name="Takami S."/>
            <person name="Terashima Y."/>
            <person name="Suzuki O."/>
            <person name="Nakagawa S."/>
            <person name="Senoh A."/>
            <person name="Mizoguchi H."/>
            <person name="Goto Y."/>
            <person name="Shimizu F."/>
            <person name="Wakebe H."/>
            <person name="Hishigaki H."/>
            <person name="Watanabe T."/>
            <person name="Sugiyama A."/>
            <person name="Takemoto M."/>
            <person name="Kawakami B."/>
            <person name="Yamazaki M."/>
            <person name="Watanabe K."/>
            <person name="Kumagai A."/>
            <person name="Itakura S."/>
            <person name="Fukuzumi Y."/>
            <person name="Fujimori Y."/>
            <person name="Komiyama M."/>
            <person name="Tashiro H."/>
            <person name="Tanigami A."/>
            <person name="Fujiwara T."/>
            <person name="Ono T."/>
            <person name="Yamada K."/>
            <person name="Fujii Y."/>
            <person name="Ozaki K."/>
            <person name="Hirao M."/>
            <person name="Ohmori Y."/>
            <person name="Kawabata A."/>
            <person name="Hikiji T."/>
            <person name="Kobatake N."/>
            <person name="Inagaki H."/>
            <person name="Ikema Y."/>
            <person name="Okamoto S."/>
            <person name="Okitani R."/>
            <person name="Kawakami T."/>
            <person name="Noguchi S."/>
            <person name="Itoh T."/>
            <person name="Shigeta K."/>
            <person name="Senba T."/>
            <person name="Matsumura K."/>
            <person name="Nakajima Y."/>
            <person name="Mizuno T."/>
            <person name="Morinaga M."/>
            <person name="Sasaki M."/>
            <person name="Togashi T."/>
            <person name="Oyama M."/>
            <person name="Hata H."/>
            <person name="Watanabe M."/>
            <person name="Komatsu T."/>
            <person name="Mizushima-Sugano J."/>
            <person name="Satoh T."/>
            <person name="Shirai Y."/>
            <person name="Takahashi Y."/>
            <person name="Nakagawa K."/>
            <person name="Okumura K."/>
            <person name="Nagase T."/>
            <person name="Nomura N."/>
            <person name="Kikuchi H."/>
            <person name="Masuho Y."/>
            <person name="Yamashita R."/>
            <person name="Nakai K."/>
            <person name="Yada T."/>
            <person name="Nakamura Y."/>
            <person name="Ohara O."/>
            <person name="Isogai T."/>
            <person name="Sugano S."/>
        </authorList>
    </citation>
    <scope>NUCLEOTIDE SEQUENCE [LARGE SCALE MRNA] (ISOFORM 2)</scope>
    <source>
        <tissue>Testis</tissue>
    </source>
</reference>
<reference key="2">
    <citation type="journal article" date="2004" name="Nature">
        <title>DNA sequence and analysis of human chromosome 9.</title>
        <authorList>
            <person name="Humphray S.J."/>
            <person name="Oliver K."/>
            <person name="Hunt A.R."/>
            <person name="Plumb R.W."/>
            <person name="Loveland J.E."/>
            <person name="Howe K.L."/>
            <person name="Andrews T.D."/>
            <person name="Searle S."/>
            <person name="Hunt S.E."/>
            <person name="Scott C.E."/>
            <person name="Jones M.C."/>
            <person name="Ainscough R."/>
            <person name="Almeida J.P."/>
            <person name="Ambrose K.D."/>
            <person name="Ashwell R.I.S."/>
            <person name="Babbage A.K."/>
            <person name="Babbage S."/>
            <person name="Bagguley C.L."/>
            <person name="Bailey J."/>
            <person name="Banerjee R."/>
            <person name="Barker D.J."/>
            <person name="Barlow K.F."/>
            <person name="Bates K."/>
            <person name="Beasley H."/>
            <person name="Beasley O."/>
            <person name="Bird C.P."/>
            <person name="Bray-Allen S."/>
            <person name="Brown A.J."/>
            <person name="Brown J.Y."/>
            <person name="Burford D."/>
            <person name="Burrill W."/>
            <person name="Burton J."/>
            <person name="Carder C."/>
            <person name="Carter N.P."/>
            <person name="Chapman J.C."/>
            <person name="Chen Y."/>
            <person name="Clarke G."/>
            <person name="Clark S.Y."/>
            <person name="Clee C.M."/>
            <person name="Clegg S."/>
            <person name="Collier R.E."/>
            <person name="Corby N."/>
            <person name="Crosier M."/>
            <person name="Cummings A.T."/>
            <person name="Davies J."/>
            <person name="Dhami P."/>
            <person name="Dunn M."/>
            <person name="Dutta I."/>
            <person name="Dyer L.W."/>
            <person name="Earthrowl M.E."/>
            <person name="Faulkner L."/>
            <person name="Fleming C.J."/>
            <person name="Frankish A."/>
            <person name="Frankland J.A."/>
            <person name="French L."/>
            <person name="Fricker D.G."/>
            <person name="Garner P."/>
            <person name="Garnett J."/>
            <person name="Ghori J."/>
            <person name="Gilbert J.G.R."/>
            <person name="Glison C."/>
            <person name="Grafham D.V."/>
            <person name="Gribble S."/>
            <person name="Griffiths C."/>
            <person name="Griffiths-Jones S."/>
            <person name="Grocock R."/>
            <person name="Guy J."/>
            <person name="Hall R.E."/>
            <person name="Hammond S."/>
            <person name="Harley J.L."/>
            <person name="Harrison E.S.I."/>
            <person name="Hart E.A."/>
            <person name="Heath P.D."/>
            <person name="Henderson C.D."/>
            <person name="Hopkins B.L."/>
            <person name="Howard P.J."/>
            <person name="Howden P.J."/>
            <person name="Huckle E."/>
            <person name="Johnson C."/>
            <person name="Johnson D."/>
            <person name="Joy A.A."/>
            <person name="Kay M."/>
            <person name="Keenan S."/>
            <person name="Kershaw J.K."/>
            <person name="Kimberley A.M."/>
            <person name="King A."/>
            <person name="Knights A."/>
            <person name="Laird G.K."/>
            <person name="Langford C."/>
            <person name="Lawlor S."/>
            <person name="Leongamornlert D.A."/>
            <person name="Leversha M."/>
            <person name="Lloyd C."/>
            <person name="Lloyd D.M."/>
            <person name="Lovell J."/>
            <person name="Martin S."/>
            <person name="Mashreghi-Mohammadi M."/>
            <person name="Matthews L."/>
            <person name="McLaren S."/>
            <person name="McLay K.E."/>
            <person name="McMurray A."/>
            <person name="Milne S."/>
            <person name="Nickerson T."/>
            <person name="Nisbett J."/>
            <person name="Nordsiek G."/>
            <person name="Pearce A.V."/>
            <person name="Peck A.I."/>
            <person name="Porter K.M."/>
            <person name="Pandian R."/>
            <person name="Pelan S."/>
            <person name="Phillimore B."/>
            <person name="Povey S."/>
            <person name="Ramsey Y."/>
            <person name="Rand V."/>
            <person name="Scharfe M."/>
            <person name="Sehra H.K."/>
            <person name="Shownkeen R."/>
            <person name="Sims S.K."/>
            <person name="Skuce C.D."/>
            <person name="Smith M."/>
            <person name="Steward C.A."/>
            <person name="Swarbreck D."/>
            <person name="Sycamore N."/>
            <person name="Tester J."/>
            <person name="Thorpe A."/>
            <person name="Tracey A."/>
            <person name="Tromans A."/>
            <person name="Thomas D.W."/>
            <person name="Wall M."/>
            <person name="Wallis J.M."/>
            <person name="West A.P."/>
            <person name="Whitehead S.L."/>
            <person name="Willey D.L."/>
            <person name="Williams S.A."/>
            <person name="Wilming L."/>
            <person name="Wray P.W."/>
            <person name="Young L."/>
            <person name="Ashurst J.L."/>
            <person name="Coulson A."/>
            <person name="Blocker H."/>
            <person name="Durbin R.M."/>
            <person name="Sulston J.E."/>
            <person name="Hubbard T."/>
            <person name="Jackson M.J."/>
            <person name="Bentley D.R."/>
            <person name="Beck S."/>
            <person name="Rogers J."/>
            <person name="Dunham I."/>
        </authorList>
    </citation>
    <scope>NUCLEOTIDE SEQUENCE [LARGE SCALE GENOMIC DNA]</scope>
</reference>
<reference key="3">
    <citation type="journal article" date="2004" name="Genome Res.">
        <title>The status, quality, and expansion of the NIH full-length cDNA project: the Mammalian Gene Collection (MGC).</title>
        <authorList>
            <consortium name="The MGC Project Team"/>
        </authorList>
    </citation>
    <scope>NUCLEOTIDE SEQUENCE [LARGE SCALE MRNA] (ISOFORM 2)</scope>
</reference>
<reference key="4">
    <citation type="journal article" date="2018" name="PLoS Genet.">
        <title>SHOC1 is a ERCC4-(HhH)2-like protein, integral to the formation of crossover recombination intermediates during mammalian meiosis.</title>
        <authorList>
            <person name="Guiraldelli M.F."/>
            <person name="Felberg A."/>
            <person name="Almeida L.P."/>
            <person name="Parikh A."/>
            <person name="de Castro R.O."/>
            <person name="Pezza R.J."/>
        </authorList>
    </citation>
    <scope>FUNCTION</scope>
    <scope>INTERACTION WITH TEX11</scope>
</reference>
<reference key="5">
    <citation type="journal article" date="2020" name="Genet. Med.">
        <title>Genetic dissection of spermatogenic arrest through exome analysis: clinical implications for the management of azoospermic men.</title>
        <authorList>
            <person name="Krausz C."/>
            <person name="Riera-Escamilla A."/>
            <person name="Moreno-Mendoza D."/>
            <person name="Holleman K."/>
            <person name="Cioppi F."/>
            <person name="Algaba F."/>
            <person name="Pybus M."/>
            <person name="Friedrich C."/>
            <person name="Wyrwoll M.J."/>
            <person name="Casamonti E."/>
            <person name="Pietroforte S."/>
            <person name="Nagirnaja L."/>
            <person name="Lopes A.M."/>
            <person name="Kliesch S."/>
            <person name="Pilatz A."/>
            <person name="Carrell D.T."/>
            <person name="Conrad D.F."/>
            <person name="Ars E."/>
            <person name="Ruiz-Castane E."/>
            <person name="Aston K.I."/>
            <person name="Baarends W.M."/>
            <person name="Tuettelmann F."/>
        </authorList>
    </citation>
    <scope>VARIANT SPGF75 449-CYS--PHE-1444 DEL</scope>
    <scope>INVOLVEMENT IN SPGF75</scope>
</reference>
<reference key="6">
    <citation type="journal article" date="2021" name="J. Med. Genet.">
        <title>Bi-allelic SHOC1 loss-of-function mutations cause meiotic arrest and non-obstructive azoospermia.</title>
        <authorList>
            <person name="Yao C."/>
            <person name="Yang C."/>
            <person name="Zhao L."/>
            <person name="Li P."/>
            <person name="Tian R."/>
            <person name="Chen H."/>
            <person name="Guo Y."/>
            <person name="Huang Y."/>
            <person name="Zhi E."/>
            <person name="Zhai J."/>
            <person name="Sun H."/>
            <person name="Zhang J."/>
            <person name="Hong Y."/>
            <person name="Zhang L."/>
            <person name="Ji Z."/>
            <person name="Zhang F."/>
            <person name="Zhou Z."/>
            <person name="Li Z."/>
        </authorList>
    </citation>
    <scope>VARIANT SPGF75 528-ARG--PHE-1444 DEL</scope>
    <scope>INVOLVEMENT IN SPGF75</scope>
</reference>
<reference key="7">
    <citation type="journal article" date="2022" name="Mol. Hum. Reprod.">
        <title>Bi-allelic variants in SHOC1 cause non-obstructive azoospermia with meiosis arrest in humans and mice.</title>
        <authorList>
            <person name="Wang W."/>
            <person name="Meng L."/>
            <person name="He J."/>
            <person name="Su L."/>
            <person name="Li Y."/>
            <person name="Tan C."/>
            <person name="Xu X."/>
            <person name="Nie H."/>
            <person name="Zhang H."/>
            <person name="Du J."/>
            <person name="Lu G."/>
            <person name="Luo M."/>
            <person name="Lin G."/>
            <person name="Tu C."/>
            <person name="Tan Y.Q."/>
        </authorList>
    </citation>
    <scope>VARIANTS SPGF75 THR-660 AND HIS-1425</scope>
    <scope>INVOLVEMENT IN SPGF75</scope>
</reference>
<comment type="function">
    <text evidence="1 3">ATPase required during meiosis for the formation of crossover recombination intermediates (By similarity). Binds DNA: preferentially binds to single-stranded DNA and DNA branched structures (PubMed:29742103). Does not show nuclease activity in vitro, but shows ATPase activity, which is stimulated by the presence of single-stranded DNA (PubMed:29742103). Plays a key role in homologous recombination and crossing-over in meiotic prophase I in male and female germ cells (By similarity). Required for proper synaptonemal complex assembly and homologous chromosome pairing (By similarity). Requiref for recruitment TEX11 and MSH4 to recombination intermediates (By similarity).</text>
</comment>
<comment type="subunit">
    <text evidence="1 3">Interacts with TEX11 (PubMed:29742103). Interacts with SPO16 (By similarity).</text>
</comment>
<comment type="subcellular location">
    <subcellularLocation>
        <location evidence="1">Chromosome</location>
    </subcellularLocation>
    <text evidence="1">Localizes to meiotic chromosomes; associates with mid-stage meiotic recombination intermediates. Localization requires meiotic double-strand breaks (DSBs) recombination intermediates catalyzed by DMC1.</text>
</comment>
<comment type="alternative products">
    <event type="alternative splicing"/>
    <isoform>
        <id>Q5VXU9-1</id>
        <name>1</name>
        <sequence type="displayed"/>
    </isoform>
    <isoform>
        <id>Q5VXU9-2</id>
        <name>2</name>
        <sequence type="described" ref="VSP_014747 VSP_014748 VSP_014749"/>
    </isoform>
    <isoform>
        <id>Q5VXU9-3</id>
        <name>3</name>
        <sequence type="described" ref="VSP_046641"/>
    </isoform>
</comment>
<comment type="disease" evidence="4 5 6">
    <disease id="DI-06452">
        <name>Spermatogenic failure 75</name>
        <acronym>SPGF75</acronym>
        <description>An autosomal recessive disorder characterized by male infertility due to non-obstructive azoospermia resulting from maturation arrest at the spermatocyte stage.</description>
        <dbReference type="MIM" id="619949"/>
    </disease>
    <text>The disease is caused by variants affecting the gene represented in this entry.</text>
</comment>
<comment type="similarity">
    <text evidence="10">Belongs to the XPF family. Highly divergent.</text>
</comment>
<comment type="caution">
    <text evidence="11">Although related to the XPF family, the nuclease active site is not conserved.</text>
</comment>
<name>SHOC1_HUMAN</name>